<comment type="function">
    <text evidence="1">Produces ATP from ADP in the presence of a proton gradient across the membrane.</text>
</comment>
<comment type="subunit">
    <text evidence="1">F-type ATPases have 2 components, CF(1) - the catalytic core - and CF(0) - the membrane proton channel. CF(1) has five subunits: alpha(3), beta(3), gamma(1), delta(1), epsilon(1). CF(0) has three main subunits: a, b and c.</text>
</comment>
<comment type="subcellular location">
    <subcellularLocation>
        <location evidence="1">Cell inner membrane</location>
        <topology evidence="1">Peripheral membrane protein</topology>
    </subcellularLocation>
</comment>
<comment type="similarity">
    <text evidence="1">Belongs to the ATPase epsilon chain family.</text>
</comment>
<organism>
    <name type="scientific">Cereibacter sphaeroides (strain ATCC 17025 / ATH 2.4.3)</name>
    <name type="common">Rhodobacter sphaeroides</name>
    <dbReference type="NCBI Taxonomy" id="349102"/>
    <lineage>
        <taxon>Bacteria</taxon>
        <taxon>Pseudomonadati</taxon>
        <taxon>Pseudomonadota</taxon>
        <taxon>Alphaproteobacteria</taxon>
        <taxon>Rhodobacterales</taxon>
        <taxon>Paracoccaceae</taxon>
        <taxon>Cereibacter</taxon>
    </lineage>
</organism>
<accession>A4WUM6</accession>
<reference key="1">
    <citation type="submission" date="2007-04" db="EMBL/GenBank/DDBJ databases">
        <title>Complete sequence of chromosome of Rhodobacter sphaeroides ATCC 17025.</title>
        <authorList>
            <consortium name="US DOE Joint Genome Institute"/>
            <person name="Copeland A."/>
            <person name="Lucas S."/>
            <person name="Lapidus A."/>
            <person name="Barry K."/>
            <person name="Detter J.C."/>
            <person name="Glavina del Rio T."/>
            <person name="Hammon N."/>
            <person name="Israni S."/>
            <person name="Dalin E."/>
            <person name="Tice H."/>
            <person name="Pitluck S."/>
            <person name="Chertkov O."/>
            <person name="Brettin T."/>
            <person name="Bruce D."/>
            <person name="Han C."/>
            <person name="Schmutz J."/>
            <person name="Larimer F."/>
            <person name="Land M."/>
            <person name="Hauser L."/>
            <person name="Kyrpides N."/>
            <person name="Kim E."/>
            <person name="Richardson P."/>
            <person name="Mackenzie C."/>
            <person name="Choudhary M."/>
            <person name="Donohue T.J."/>
            <person name="Kaplan S."/>
        </authorList>
    </citation>
    <scope>NUCLEOTIDE SEQUENCE [LARGE SCALE GENOMIC DNA]</scope>
    <source>
        <strain>ATCC 17025 / ATH 2.4.3</strain>
    </source>
</reference>
<protein>
    <recommendedName>
        <fullName evidence="1">ATP synthase epsilon chain</fullName>
    </recommendedName>
    <alternativeName>
        <fullName evidence="1">ATP synthase F1 sector epsilon subunit</fullName>
    </alternativeName>
    <alternativeName>
        <fullName evidence="1">F-ATPase epsilon subunit</fullName>
    </alternativeName>
</protein>
<evidence type="ECO:0000255" key="1">
    <source>
        <dbReference type="HAMAP-Rule" id="MF_00530"/>
    </source>
</evidence>
<dbReference type="EMBL" id="CP000661">
    <property type="protein sequence ID" value="ABP71090.1"/>
    <property type="molecule type" value="Genomic_DNA"/>
</dbReference>
<dbReference type="SMR" id="A4WUM6"/>
<dbReference type="STRING" id="349102.Rsph17025_2200"/>
<dbReference type="KEGG" id="rsq:Rsph17025_2200"/>
<dbReference type="eggNOG" id="COG0355">
    <property type="taxonomic scope" value="Bacteria"/>
</dbReference>
<dbReference type="HOGENOM" id="CLU_084338_2_1_5"/>
<dbReference type="BioCyc" id="RSPH349102:G1G8M-2268-MONOMER"/>
<dbReference type="GO" id="GO:0005886">
    <property type="term" value="C:plasma membrane"/>
    <property type="evidence" value="ECO:0007669"/>
    <property type="project" value="UniProtKB-SubCell"/>
</dbReference>
<dbReference type="GO" id="GO:0045259">
    <property type="term" value="C:proton-transporting ATP synthase complex"/>
    <property type="evidence" value="ECO:0007669"/>
    <property type="project" value="UniProtKB-KW"/>
</dbReference>
<dbReference type="GO" id="GO:0005524">
    <property type="term" value="F:ATP binding"/>
    <property type="evidence" value="ECO:0007669"/>
    <property type="project" value="UniProtKB-UniRule"/>
</dbReference>
<dbReference type="GO" id="GO:0046933">
    <property type="term" value="F:proton-transporting ATP synthase activity, rotational mechanism"/>
    <property type="evidence" value="ECO:0007669"/>
    <property type="project" value="UniProtKB-UniRule"/>
</dbReference>
<dbReference type="CDD" id="cd12152">
    <property type="entry name" value="F1-ATPase_delta"/>
    <property type="match status" value="1"/>
</dbReference>
<dbReference type="Gene3D" id="2.60.15.10">
    <property type="entry name" value="F0F1 ATP synthase delta/epsilon subunit, N-terminal"/>
    <property type="match status" value="1"/>
</dbReference>
<dbReference type="HAMAP" id="MF_00530">
    <property type="entry name" value="ATP_synth_epsil_bac"/>
    <property type="match status" value="1"/>
</dbReference>
<dbReference type="InterPro" id="IPR001469">
    <property type="entry name" value="ATP_synth_F1_dsu/esu"/>
</dbReference>
<dbReference type="InterPro" id="IPR020546">
    <property type="entry name" value="ATP_synth_F1_dsu/esu_N"/>
</dbReference>
<dbReference type="InterPro" id="IPR036771">
    <property type="entry name" value="ATPsynth_dsu/esu_N"/>
</dbReference>
<dbReference type="NCBIfam" id="TIGR01216">
    <property type="entry name" value="ATP_synt_epsi"/>
    <property type="match status" value="1"/>
</dbReference>
<dbReference type="NCBIfam" id="NF009978">
    <property type="entry name" value="PRK13443.1"/>
    <property type="match status" value="1"/>
</dbReference>
<dbReference type="PANTHER" id="PTHR13822">
    <property type="entry name" value="ATP SYNTHASE DELTA/EPSILON CHAIN"/>
    <property type="match status" value="1"/>
</dbReference>
<dbReference type="PANTHER" id="PTHR13822:SF10">
    <property type="entry name" value="ATP SYNTHASE EPSILON CHAIN, CHLOROPLASTIC"/>
    <property type="match status" value="1"/>
</dbReference>
<dbReference type="Pfam" id="PF02823">
    <property type="entry name" value="ATP-synt_DE_N"/>
    <property type="match status" value="1"/>
</dbReference>
<dbReference type="SUPFAM" id="SSF51344">
    <property type="entry name" value="Epsilon subunit of F1F0-ATP synthase N-terminal domain"/>
    <property type="match status" value="1"/>
</dbReference>
<name>ATPE_CERS5</name>
<gene>
    <name evidence="1" type="primary">atpC</name>
    <name type="ordered locus">Rsph17025_2200</name>
</gene>
<keyword id="KW-0066">ATP synthesis</keyword>
<keyword id="KW-0997">Cell inner membrane</keyword>
<keyword id="KW-1003">Cell membrane</keyword>
<keyword id="KW-0139">CF(1)</keyword>
<keyword id="KW-0375">Hydrogen ion transport</keyword>
<keyword id="KW-0406">Ion transport</keyword>
<keyword id="KW-0472">Membrane</keyword>
<keyword id="KW-0813">Transport</keyword>
<sequence length="132" mass="13799">MAGTLQFDLVSPERRLASFAATEVQVPGTDGDMTAMEGHAPTITTLRPGILRAQGPSGVQAYAVTGGFAEINATSISVLAEKAVAVEELTGTVLDEFIAEARELVSVALPEDKDMAERTLNDMLALRASAGH</sequence>
<proteinExistence type="inferred from homology"/>
<feature type="chain" id="PRO_1000056525" description="ATP synthase epsilon chain">
    <location>
        <begin position="1"/>
        <end position="132"/>
    </location>
</feature>